<comment type="function">
    <text evidence="1">Translocates 4-amino-4-deoxy-L-arabinose-phosphoundecaprenol (alpha-L-Ara4N-phosphoundecaprenol) from the cytoplasmic to the periplasmic side of the inner membrane.</text>
</comment>
<comment type="pathway">
    <text evidence="1">Bacterial outer membrane biogenesis; lipopolysaccharide biosynthesis.</text>
</comment>
<comment type="subunit">
    <text evidence="1">Heterodimer of ArnE and ArnF.</text>
</comment>
<comment type="subcellular location">
    <subcellularLocation>
        <location evidence="1">Cell inner membrane</location>
        <topology evidence="1">Multi-pass membrane protein</topology>
    </subcellularLocation>
</comment>
<comment type="similarity">
    <text evidence="1">Belongs to the ArnE family.</text>
</comment>
<gene>
    <name evidence="1" type="primary">arnE</name>
    <name type="ordered locus">STM2302</name>
</gene>
<accession>O52328</accession>
<sequence length="111" mass="12045">MIGVVLVLASLLSVGGQLCQKQATRPLTAGGRRRHLMLWLGLALICMGAAMVLWLLVLQTLPVGIAYPMLSLNFVWVTLAAWKIWHEQVPPRHWLGVALIISGIIILGSAA</sequence>
<name>ARNE_SALTY</name>
<organism>
    <name type="scientific">Salmonella typhimurium (strain LT2 / SGSC1412 / ATCC 700720)</name>
    <dbReference type="NCBI Taxonomy" id="99287"/>
    <lineage>
        <taxon>Bacteria</taxon>
        <taxon>Pseudomonadati</taxon>
        <taxon>Pseudomonadota</taxon>
        <taxon>Gammaproteobacteria</taxon>
        <taxon>Enterobacterales</taxon>
        <taxon>Enterobacteriaceae</taxon>
        <taxon>Salmonella</taxon>
    </lineage>
</organism>
<evidence type="ECO:0000255" key="1">
    <source>
        <dbReference type="HAMAP-Rule" id="MF_01869"/>
    </source>
</evidence>
<dbReference type="EMBL" id="AF036677">
    <property type="protein sequence ID" value="AAC04775.1"/>
    <property type="molecule type" value="Genomic_DNA"/>
</dbReference>
<dbReference type="EMBL" id="AE006468">
    <property type="protein sequence ID" value="AAL21203.1"/>
    <property type="molecule type" value="Genomic_DNA"/>
</dbReference>
<dbReference type="RefSeq" id="NP_461244.1">
    <property type="nucleotide sequence ID" value="NC_003197.2"/>
</dbReference>
<dbReference type="RefSeq" id="WP_000580685.1">
    <property type="nucleotide sequence ID" value="NC_003197.2"/>
</dbReference>
<dbReference type="SMR" id="O52328"/>
<dbReference type="STRING" id="99287.STM2302"/>
<dbReference type="PaxDb" id="99287-STM2302"/>
<dbReference type="GeneID" id="1253824"/>
<dbReference type="KEGG" id="stm:STM2302"/>
<dbReference type="PATRIC" id="fig|99287.12.peg.2437"/>
<dbReference type="HOGENOM" id="CLU_131462_5_1_6"/>
<dbReference type="OMA" id="TCAGQLC"/>
<dbReference type="PhylomeDB" id="O52328"/>
<dbReference type="BioCyc" id="SENT99287:STM2302-MONOMER"/>
<dbReference type="UniPathway" id="UPA00030"/>
<dbReference type="Proteomes" id="UP000001014">
    <property type="component" value="Chromosome"/>
</dbReference>
<dbReference type="GO" id="GO:0005886">
    <property type="term" value="C:plasma membrane"/>
    <property type="evidence" value="ECO:0000318"/>
    <property type="project" value="GO_Central"/>
</dbReference>
<dbReference type="GO" id="GO:1901505">
    <property type="term" value="F:carbohydrate derivative transmembrane transporter activity"/>
    <property type="evidence" value="ECO:0007669"/>
    <property type="project" value="InterPro"/>
</dbReference>
<dbReference type="GO" id="GO:0022857">
    <property type="term" value="F:transmembrane transporter activity"/>
    <property type="evidence" value="ECO:0000318"/>
    <property type="project" value="GO_Central"/>
</dbReference>
<dbReference type="GO" id="GO:0009245">
    <property type="term" value="P:lipid A biosynthetic process"/>
    <property type="evidence" value="ECO:0007669"/>
    <property type="project" value="UniProtKB-UniRule"/>
</dbReference>
<dbReference type="GO" id="GO:0009103">
    <property type="term" value="P:lipopolysaccharide biosynthetic process"/>
    <property type="evidence" value="ECO:0007669"/>
    <property type="project" value="UniProtKB-UniRule"/>
</dbReference>
<dbReference type="GO" id="GO:0055085">
    <property type="term" value="P:transmembrane transport"/>
    <property type="evidence" value="ECO:0000318"/>
    <property type="project" value="GO_Central"/>
</dbReference>
<dbReference type="FunFam" id="1.10.3730.20:FF:000002">
    <property type="entry name" value="Probable 4-amino-4-deoxy-L-arabinose-phosphoundecaprenol flippase subunit ArnE"/>
    <property type="match status" value="1"/>
</dbReference>
<dbReference type="Gene3D" id="1.10.3730.20">
    <property type="match status" value="1"/>
</dbReference>
<dbReference type="HAMAP" id="MF_01869">
    <property type="entry name" value="Flippase_ArnE"/>
    <property type="match status" value="1"/>
</dbReference>
<dbReference type="InterPro" id="IPR000620">
    <property type="entry name" value="EamA_dom"/>
</dbReference>
<dbReference type="InterPro" id="IPR022883">
    <property type="entry name" value="Flippase_ArnE"/>
</dbReference>
<dbReference type="InterPro" id="IPR000390">
    <property type="entry name" value="Small_drug/metabolite_transptr"/>
</dbReference>
<dbReference type="NCBIfam" id="NF011625">
    <property type="entry name" value="PRK15051.1"/>
    <property type="match status" value="1"/>
</dbReference>
<dbReference type="PANTHER" id="PTHR30561:SF23">
    <property type="entry name" value="4-AMINO-4-DEOXY-L-ARABINOSE-PHOSPHOUNDECAPRENOL FLIPPASE SUBUNIT ARNE-RELATED"/>
    <property type="match status" value="1"/>
</dbReference>
<dbReference type="PANTHER" id="PTHR30561">
    <property type="entry name" value="SMR FAMILY PROTON-DEPENDENT DRUG EFFLUX TRANSPORTER SUGE"/>
    <property type="match status" value="1"/>
</dbReference>
<dbReference type="Pfam" id="PF00892">
    <property type="entry name" value="EamA"/>
    <property type="match status" value="1"/>
</dbReference>
<dbReference type="SUPFAM" id="SSF103481">
    <property type="entry name" value="Multidrug resistance efflux transporter EmrE"/>
    <property type="match status" value="1"/>
</dbReference>
<feature type="chain" id="PRO_0000169186" description="Probable 4-amino-4-deoxy-L-arabinose-phosphoundecaprenol flippase subunit ArnE">
    <location>
        <begin position="1"/>
        <end position="111"/>
    </location>
</feature>
<feature type="transmembrane region" description="Helical" evidence="1">
    <location>
        <begin position="38"/>
        <end position="58"/>
    </location>
</feature>
<feature type="transmembrane region" description="Helical" evidence="1">
    <location>
        <begin position="61"/>
        <end position="81"/>
    </location>
</feature>
<feature type="transmembrane region" description="Helical" evidence="1">
    <location>
        <begin position="91"/>
        <end position="111"/>
    </location>
</feature>
<feature type="domain" description="EamA" evidence="1">
    <location>
        <begin position="40"/>
        <end position="109"/>
    </location>
</feature>
<proteinExistence type="inferred from homology"/>
<keyword id="KW-0997">Cell inner membrane</keyword>
<keyword id="KW-1003">Cell membrane</keyword>
<keyword id="KW-0441">Lipid A biosynthesis</keyword>
<keyword id="KW-0444">Lipid biosynthesis</keyword>
<keyword id="KW-0443">Lipid metabolism</keyword>
<keyword id="KW-0448">Lipopolysaccharide biosynthesis</keyword>
<keyword id="KW-0472">Membrane</keyword>
<keyword id="KW-1185">Reference proteome</keyword>
<keyword id="KW-0812">Transmembrane</keyword>
<keyword id="KW-1133">Transmembrane helix</keyword>
<keyword id="KW-0813">Transport</keyword>
<reference key="1">
    <citation type="journal article" date="1998" name="Mol. Microbiol.">
        <title>PmrA-PmrB-regulated genes necessary for 4-aminoarabinose lipid A modification and polymyxin resistance.</title>
        <authorList>
            <person name="Gunn J.S."/>
            <person name="Lim K.B."/>
            <person name="Krueger J."/>
            <person name="Kim K."/>
            <person name="Guo L."/>
            <person name="Hackett M."/>
            <person name="Miller S.I."/>
        </authorList>
    </citation>
    <scope>NUCLEOTIDE SEQUENCE [GENOMIC DNA]</scope>
    <source>
        <strain>ATCC 14028s / SGSG 2262</strain>
    </source>
</reference>
<reference key="2">
    <citation type="journal article" date="2001" name="Nature">
        <title>Complete genome sequence of Salmonella enterica serovar Typhimurium LT2.</title>
        <authorList>
            <person name="McClelland M."/>
            <person name="Sanderson K.E."/>
            <person name="Spieth J."/>
            <person name="Clifton S.W."/>
            <person name="Latreille P."/>
            <person name="Courtney L."/>
            <person name="Porwollik S."/>
            <person name="Ali J."/>
            <person name="Dante M."/>
            <person name="Du F."/>
            <person name="Hou S."/>
            <person name="Layman D."/>
            <person name="Leonard S."/>
            <person name="Nguyen C."/>
            <person name="Scott K."/>
            <person name="Holmes A."/>
            <person name="Grewal N."/>
            <person name="Mulvaney E."/>
            <person name="Ryan E."/>
            <person name="Sun H."/>
            <person name="Florea L."/>
            <person name="Miller W."/>
            <person name="Stoneking T."/>
            <person name="Nhan M."/>
            <person name="Waterston R."/>
            <person name="Wilson R.K."/>
        </authorList>
    </citation>
    <scope>NUCLEOTIDE SEQUENCE [LARGE SCALE GENOMIC DNA]</scope>
    <source>
        <strain>LT2 / SGSC1412 / ATCC 700720</strain>
    </source>
</reference>
<protein>
    <recommendedName>
        <fullName evidence="1">Probable 4-amino-4-deoxy-L-arabinose-phosphoundecaprenol flippase subunit ArnE</fullName>
        <shortName evidence="1">L-Ara4N-phosphoundecaprenol flippase subunit ArnE</shortName>
    </recommendedName>
    <alternativeName>
        <fullName evidence="1">Undecaprenyl phosphate-aminoarabinose flippase subunit ArnE</fullName>
    </alternativeName>
</protein>